<accession>P0A5Y7</accession>
<accession>A0A1R3Y0K6</accession>
<accession>P46533</accession>
<accession>X2BIC8</accession>
<gene>
    <name evidence="4" type="primary">inhA</name>
    <name type="ordered locus">BQ2027_MB1520</name>
</gene>
<comment type="function">
    <text evidence="1">Enoyl-ACP reductase of the type II fatty acid syntase (FAS-II) system, which is involved in the biosynthesis of mycolic acids, a major component of mycobacterial cell walls. Catalyzes the NADH-dependent reduction of the double bond of 2-trans-enoyl-[acyl-carrier protein], an essential step in the fatty acid elongation cycle of the FAS-II pathway. Shows preference for long-chain fatty acyl thioester substrates, and can also use 2-trans-enoyl-CoAs as alternative substrates. The mycobacterial FAS-II system utilizes the products of the FAS-I system as primers to extend fatty acyl chain lengths up to C56, forming the meromycolate chain that serves as the precursor for final mycolic acids.</text>
</comment>
<comment type="function">
    <text evidence="1 2">Is the primary target of the first-line antitubercular drug isoniazid (INH) and of the second-line drug ethionamide (ETH) (PubMed:12406221). Overexpressed inhA confers INH and ETH resistance to M.bovis (PubMed:12406221). The mechanism of isoniazid action against InhA is covalent attachment of the activated form of the drug to the nicotinamide ring of NAD and binding of the INH-NAD adduct to the active site of InhA (By similarity). Similarly, the ETH-NAD adduct binds InhA (By similarity).</text>
</comment>
<comment type="catalytic activity">
    <reaction evidence="1">
        <text>a 2,3-saturated acyl-[ACP] + NAD(+) = a (2E)-enoyl-[ACP] + NADH + H(+)</text>
        <dbReference type="Rhea" id="RHEA:10240"/>
        <dbReference type="Rhea" id="RHEA-COMP:9925"/>
        <dbReference type="Rhea" id="RHEA-COMP:9926"/>
        <dbReference type="ChEBI" id="CHEBI:15378"/>
        <dbReference type="ChEBI" id="CHEBI:57540"/>
        <dbReference type="ChEBI" id="CHEBI:57945"/>
        <dbReference type="ChEBI" id="CHEBI:78784"/>
        <dbReference type="ChEBI" id="CHEBI:78785"/>
        <dbReference type="EC" id="1.3.1.9"/>
    </reaction>
    <physiologicalReaction direction="right-to-left" evidence="1">
        <dbReference type="Rhea" id="RHEA:10242"/>
    </physiologicalReaction>
</comment>
<comment type="catalytic activity">
    <reaction evidence="1">
        <text>a 2,3-saturated acyl-CoA + NAD(+) = a (2E)-enoyl-CoA + NADH + H(+)</text>
        <dbReference type="Rhea" id="RHEA:18177"/>
        <dbReference type="ChEBI" id="CHEBI:15378"/>
        <dbReference type="ChEBI" id="CHEBI:57540"/>
        <dbReference type="ChEBI" id="CHEBI:57945"/>
        <dbReference type="ChEBI" id="CHEBI:58856"/>
        <dbReference type="ChEBI" id="CHEBI:65111"/>
    </reaction>
    <physiologicalReaction direction="right-to-left" evidence="1">
        <dbReference type="Rhea" id="RHEA:18179"/>
    </physiologicalReaction>
</comment>
<comment type="pathway">
    <text evidence="1">Lipid metabolism; mycolic acid biosynthesis.</text>
</comment>
<comment type="subunit">
    <text evidence="1">Homodimer. Homotetramer.</text>
</comment>
<comment type="similarity">
    <text evidence="5">Belongs to the short-chain dehydrogenases/reductases (SDR) family. FabI subfamily.</text>
</comment>
<keyword id="KW-0046">Antibiotic resistance</keyword>
<keyword id="KW-0275">Fatty acid biosynthesis</keyword>
<keyword id="KW-0276">Fatty acid metabolism</keyword>
<keyword id="KW-0444">Lipid biosynthesis</keyword>
<keyword id="KW-0443">Lipid metabolism</keyword>
<keyword id="KW-0520">NAD</keyword>
<keyword id="KW-0560">Oxidoreductase</keyword>
<keyword id="KW-1185">Reference proteome</keyword>
<sequence>MTGLLDGKRILVSGIITDSSIAFHIARVAQEQGAQLVLTGFDRLRLIQRITDRLPAKAPLLELDVQNEEHLASLAGRVTEAIGAGNKLDGVVHSIGFMPQTGMGINPFFDAPYADVSKGIHISAYSYASMAKALLPIMNPGGSIVGMDFDPSRAMPAYNWMTVAKSALESVNRFVAREAGKYGVRSNLVAAGPIRTLAMSAIVGGALGEEAGAQIQLLEEGWDQRAPIGWNMKDATPVAKTVCALLSDWLPATTGDIIYADGGAHTQLL</sequence>
<name>INHA_MYCBO</name>
<evidence type="ECO:0000250" key="1">
    <source>
        <dbReference type="UniProtKB" id="P9WGR1"/>
    </source>
</evidence>
<evidence type="ECO:0000269" key="2">
    <source>
    </source>
</evidence>
<evidence type="ECO:0000269" key="3">
    <source>
    </source>
</evidence>
<evidence type="ECO:0000303" key="4">
    <source>
    </source>
</evidence>
<evidence type="ECO:0000305" key="5"/>
<proteinExistence type="evidence at protein level"/>
<protein>
    <recommendedName>
        <fullName evidence="1">Enoyl-[acyl-carrier-protein] reductase [NADH]</fullName>
        <shortName evidence="1">ENR</shortName>
        <shortName evidence="1">Enoyl-ACP reductase</shortName>
        <ecNumber evidence="1">1.3.1.9</ecNumber>
    </recommendedName>
    <alternativeName>
        <fullName evidence="1">FAS-II enoyl-ACP reductase</fullName>
    </alternativeName>
    <alternativeName>
        <fullName evidence="1">NADH-dependent 2-trans-enoyl-ACP reductase</fullName>
    </alternativeName>
</protein>
<organism>
    <name type="scientific">Mycobacterium bovis (strain ATCC BAA-935 / AF2122/97)</name>
    <dbReference type="NCBI Taxonomy" id="233413"/>
    <lineage>
        <taxon>Bacteria</taxon>
        <taxon>Bacillati</taxon>
        <taxon>Actinomycetota</taxon>
        <taxon>Actinomycetes</taxon>
        <taxon>Mycobacteriales</taxon>
        <taxon>Mycobacteriaceae</taxon>
        <taxon>Mycobacterium</taxon>
        <taxon>Mycobacterium tuberculosis complex</taxon>
    </lineage>
</organism>
<dbReference type="EC" id="1.3.1.9" evidence="1"/>
<dbReference type="EMBL" id="U41388">
    <property type="protein sequence ID" value="AAB60183.1"/>
    <property type="molecule type" value="Genomic_DNA"/>
</dbReference>
<dbReference type="EMBL" id="LT708304">
    <property type="protein sequence ID" value="SIU00123.1"/>
    <property type="molecule type" value="Genomic_DNA"/>
</dbReference>
<dbReference type="RefSeq" id="NP_855172.1">
    <property type="nucleotide sequence ID" value="NC_002945.3"/>
</dbReference>
<dbReference type="RefSeq" id="WP_003407553.1">
    <property type="nucleotide sequence ID" value="NC_002945.4"/>
</dbReference>
<dbReference type="SMR" id="P0A5Y7"/>
<dbReference type="GeneID" id="45425463"/>
<dbReference type="KEGG" id="mbo:BQ2027_MB1520"/>
<dbReference type="PATRIC" id="fig|233413.5.peg.1661"/>
<dbReference type="UniPathway" id="UPA00915"/>
<dbReference type="Proteomes" id="UP000001419">
    <property type="component" value="Chromosome"/>
</dbReference>
<dbReference type="GO" id="GO:0004318">
    <property type="term" value="F:enoyl-[acyl-carrier-protein] reductase (NADH) activity"/>
    <property type="evidence" value="ECO:0007669"/>
    <property type="project" value="UniProtKB-EC"/>
</dbReference>
<dbReference type="GO" id="GO:0050343">
    <property type="term" value="F:trans-2-enoyl-CoA reductase (NADH) activity"/>
    <property type="evidence" value="ECO:0007669"/>
    <property type="project" value="RHEA"/>
</dbReference>
<dbReference type="GO" id="GO:0006633">
    <property type="term" value="P:fatty acid biosynthetic process"/>
    <property type="evidence" value="ECO:0007669"/>
    <property type="project" value="UniProtKB-KW"/>
</dbReference>
<dbReference type="GO" id="GO:0046677">
    <property type="term" value="P:response to antibiotic"/>
    <property type="evidence" value="ECO:0007669"/>
    <property type="project" value="UniProtKB-KW"/>
</dbReference>
<dbReference type="CDD" id="cd05372">
    <property type="entry name" value="ENR_SDR"/>
    <property type="match status" value="1"/>
</dbReference>
<dbReference type="FunFam" id="3.40.50.720:FF:000350">
    <property type="entry name" value="Enoyl-[acyl-carrier-protein] reductase [NADH]"/>
    <property type="match status" value="1"/>
</dbReference>
<dbReference type="Gene3D" id="3.40.50.720">
    <property type="entry name" value="NAD(P)-binding Rossmann-like Domain"/>
    <property type="match status" value="1"/>
</dbReference>
<dbReference type="InterPro" id="IPR014358">
    <property type="entry name" value="Enoyl-ACP_Rdtase_NADH"/>
</dbReference>
<dbReference type="InterPro" id="IPR053410">
    <property type="entry name" value="Mycobact_enoyl-ACP_red"/>
</dbReference>
<dbReference type="InterPro" id="IPR036291">
    <property type="entry name" value="NAD(P)-bd_dom_sf"/>
</dbReference>
<dbReference type="InterPro" id="IPR002347">
    <property type="entry name" value="SDR_fam"/>
</dbReference>
<dbReference type="NCBIfam" id="NF040631">
    <property type="entry name" value="InhA"/>
    <property type="match status" value="1"/>
</dbReference>
<dbReference type="NCBIfam" id="NF005908">
    <property type="entry name" value="PRK07889.1"/>
    <property type="match status" value="1"/>
</dbReference>
<dbReference type="PANTHER" id="PTHR43159">
    <property type="entry name" value="ENOYL-[ACYL-CARRIER-PROTEIN] REDUCTASE"/>
    <property type="match status" value="1"/>
</dbReference>
<dbReference type="PANTHER" id="PTHR43159:SF2">
    <property type="entry name" value="ENOYL-[ACYL-CARRIER-PROTEIN] REDUCTASE [NADH], CHLOROPLASTIC"/>
    <property type="match status" value="1"/>
</dbReference>
<dbReference type="Pfam" id="PF13561">
    <property type="entry name" value="adh_short_C2"/>
    <property type="match status" value="1"/>
</dbReference>
<dbReference type="PIRSF" id="PIRSF000094">
    <property type="entry name" value="Enoyl-ACP_rdct"/>
    <property type="match status" value="1"/>
</dbReference>
<dbReference type="SUPFAM" id="SSF51735">
    <property type="entry name" value="NAD(P)-binding Rossmann-fold domains"/>
    <property type="match status" value="1"/>
</dbReference>
<reference key="1">
    <citation type="journal article" date="1994" name="Science">
        <title>inhA, a gene encoding a target for isoniazid and ethionamide in Mycobacterium tuberculosis.</title>
        <authorList>
            <person name="Banerjee A."/>
            <person name="Dubnau E."/>
            <person name="Quemard A."/>
            <person name="Balasubramanian V."/>
            <person name="Um K.S."/>
            <person name="Wilson T."/>
            <person name="Collins D."/>
            <person name="de Lisle G."/>
            <person name="Jacobs W.R. Jr."/>
        </authorList>
    </citation>
    <scope>NUCLEOTIDE SEQUENCE [GENOMIC DNA]</scope>
    <scope>CHARACTERIZATION OF VARIANT SER-94</scope>
    <scope>DRUG RESISTANCE</scope>
    <source>
        <strain>BCG</strain>
    </source>
</reference>
<reference key="2">
    <citation type="journal article" date="1995" name="Mol. Microbiol.">
        <title>Effect of inhA and katG on isoniazid resistance and virulence of Mycobacterium bovis.</title>
        <authorList>
            <person name="Wilson T.M."/>
            <person name="de Lisle G.W."/>
            <person name="Collins D.M."/>
        </authorList>
    </citation>
    <scope>NUCLEOTIDE SEQUENCE [GENOMIC DNA]</scope>
    <source>
        <strain>WAG201</strain>
    </source>
</reference>
<reference key="3">
    <citation type="journal article" date="2003" name="Proc. Natl. Acad. Sci. U.S.A.">
        <title>The complete genome sequence of Mycobacterium bovis.</title>
        <authorList>
            <person name="Garnier T."/>
            <person name="Eiglmeier K."/>
            <person name="Camus J.-C."/>
            <person name="Medina N."/>
            <person name="Mansoor H."/>
            <person name="Pryor M."/>
            <person name="Duthoy S."/>
            <person name="Grondin S."/>
            <person name="Lacroix C."/>
            <person name="Monsempe C."/>
            <person name="Simon S."/>
            <person name="Harris B."/>
            <person name="Atkin R."/>
            <person name="Doggett J."/>
            <person name="Mayes R."/>
            <person name="Keating L."/>
            <person name="Wheeler P.R."/>
            <person name="Parkhill J."/>
            <person name="Barrell B.G."/>
            <person name="Cole S.T."/>
            <person name="Gordon S.V."/>
            <person name="Hewinson R.G."/>
        </authorList>
    </citation>
    <scope>NUCLEOTIDE SEQUENCE [LARGE SCALE GENOMIC DNA]</scope>
    <source>
        <strain>ATCC BAA-935 / AF2122/97</strain>
    </source>
</reference>
<reference key="4">
    <citation type="journal article" date="2017" name="Genome Announc.">
        <title>Updated reference genome sequence and annotation of Mycobacterium bovis AF2122/97.</title>
        <authorList>
            <person name="Malone K.M."/>
            <person name="Farrell D."/>
            <person name="Stuber T.P."/>
            <person name="Schubert O.T."/>
            <person name="Aebersold R."/>
            <person name="Robbe-Austerman S."/>
            <person name="Gordon S.V."/>
        </authorList>
    </citation>
    <scope>NUCLEOTIDE SEQUENCE [LARGE SCALE GENOMIC DNA]</scope>
    <scope>GENOME REANNOTATION</scope>
    <source>
        <strain>ATCC BAA-935 / AF2122/97</strain>
    </source>
</reference>
<reference key="5">
    <citation type="journal article" date="2002" name="Mol. Microbiol.">
        <title>Overexpression of inhA, but not kasA, confers resistance to isoniazid and ethionamide in Mycobacterium smegmatis, M. bovis BCG and M. tuberculosis.</title>
        <authorList>
            <person name="Larsen M.H."/>
            <person name="Vilcheze C."/>
            <person name="Kremer L."/>
            <person name="Besra G.S."/>
            <person name="Parsons L."/>
            <person name="Salfinger M."/>
            <person name="Heifets L."/>
            <person name="Hazbon M.H."/>
            <person name="Alland D."/>
            <person name="Sacchettini J.C."/>
            <person name="Jacobs W.R. Jr."/>
        </authorList>
    </citation>
    <scope>DRUG TARGET</scope>
    <scope>DRUG RESISTANCE</scope>
    <source>
        <strain>BCG</strain>
    </source>
</reference>
<feature type="chain" id="PRO_0000054915" description="Enoyl-[acyl-carrier-protein] reductase [NADH]">
    <location>
        <begin position="1"/>
        <end position="269"/>
    </location>
</feature>
<feature type="binding site" evidence="1">
    <location>
        <begin position="20"/>
        <end position="21"/>
    </location>
    <ligand>
        <name>NAD(+)</name>
        <dbReference type="ChEBI" id="CHEBI:57540"/>
    </ligand>
</feature>
<feature type="binding site" evidence="1">
    <location>
        <begin position="64"/>
        <end position="65"/>
    </location>
    <ligand>
        <name>NAD(+)</name>
        <dbReference type="ChEBI" id="CHEBI:57540"/>
    </ligand>
</feature>
<feature type="binding site" evidence="1">
    <location>
        <begin position="95"/>
        <end position="96"/>
    </location>
    <ligand>
        <name>NAD(+)</name>
        <dbReference type="ChEBI" id="CHEBI:57540"/>
    </ligand>
</feature>
<feature type="binding site" evidence="1">
    <location>
        <position position="158"/>
    </location>
    <ligand>
        <name>substrate</name>
    </ligand>
</feature>
<feature type="binding site" evidence="1">
    <location>
        <position position="165"/>
    </location>
    <ligand>
        <name>NAD(+)</name>
        <dbReference type="ChEBI" id="CHEBI:57540"/>
    </ligand>
</feature>
<feature type="binding site" evidence="1">
    <location>
        <position position="194"/>
    </location>
    <ligand>
        <name>NAD(+)</name>
        <dbReference type="ChEBI" id="CHEBI:57540"/>
    </ligand>
</feature>
<feature type="site" description="May act as an intermediate that passes the hydride ion from NADH to the substrate" evidence="1">
    <location>
        <position position="149"/>
    </location>
</feature>
<feature type="site" description="Transition state stabilizer" evidence="1">
    <location>
        <position position="158"/>
    </location>
</feature>
<feature type="sequence variant" description="In strain: NZ; INH-resistant." evidence="3">
    <original>S</original>
    <variation>A</variation>
    <location>
        <position position="94"/>
    </location>
</feature>